<organism>
    <name type="scientific">Hypseleotris compressa</name>
    <name type="common">Empire gudgeon</name>
    <name type="synonym">Eleotris compressus</name>
    <dbReference type="NCBI Taxonomy" id="92064"/>
    <lineage>
        <taxon>Eukaryota</taxon>
        <taxon>Metazoa</taxon>
        <taxon>Chordata</taxon>
        <taxon>Craniata</taxon>
        <taxon>Vertebrata</taxon>
        <taxon>Euteleostomi</taxon>
        <taxon>Actinopterygii</taxon>
        <taxon>Neopterygii</taxon>
        <taxon>Teleostei</taxon>
        <taxon>Neoteleostei</taxon>
        <taxon>Acanthomorphata</taxon>
        <taxon>Gobiaria</taxon>
        <taxon>Gobiiformes</taxon>
        <taxon>Eleotroidei</taxon>
        <taxon>Eleotridae</taxon>
        <taxon>Eleotrinae</taxon>
        <taxon>Hypseleotris</taxon>
    </lineage>
</organism>
<gene>
    <name type="primary">mt-cyb</name>
    <name type="synonym">cob</name>
    <name type="synonym">cytb</name>
    <name type="synonym">mtcyb</name>
</gene>
<proteinExistence type="inferred from homology"/>
<sequence>MANLRKTHPLLKIANDALVDLPAPSNISAWWNFGSLLGLCLGAQLVTGIFLAMHYTADIATAFSSVAHICRDVNFGWLIRNMHANGASFFFICIYLHVGRGLYYGSYLYKETWNIGVVLLLLVMMTAFVGYVLPWGQMSFWGATVITNLLSAVPYVGNTLVQWIWGGFSVDNATLTRFFAFHFLLPFIIAAVTVLHLLFLHETGSNNPAGLNSDADKIPFHPYFSYKDLLGFAIMLLALTSLALFTPNYLGDPDNFTPANPLVTPPHIKPEWYFLFAYAILRSIPNKLGGVLALLASILVLMLVPFLHTSKQRSLTFRPISQFIFWALVANVLILTWIGGMPVEHPYIIIGQIASLLYFSIFLVLFPMAGWLENKLLALNCSSSSALERRSCKPDAGG</sequence>
<reference key="1">
    <citation type="journal article" date="2000" name="Gene">
        <title>Evolutionary aspects of gobioid fishes based upon a phylogenetic analysis of mitochondrial cytochrome b genes.</title>
        <authorList>
            <person name="Akihito X."/>
            <person name="Iwata A."/>
            <person name="Kobayashi T."/>
            <person name="Ikeo K."/>
            <person name="Imanishi T."/>
            <person name="Ono H."/>
            <person name="Umehara Y."/>
            <person name="Hamamatsu C."/>
            <person name="Sugiyama K."/>
            <person name="Ikeda Y."/>
            <person name="Sakamoto K."/>
            <person name="Fumihito A."/>
            <person name="Ohno S."/>
            <person name="Gojobori T."/>
        </authorList>
    </citation>
    <scope>NUCLEOTIDE SEQUENCE [GENOMIC DNA]</scope>
</reference>
<keyword id="KW-0249">Electron transport</keyword>
<keyword id="KW-0349">Heme</keyword>
<keyword id="KW-0408">Iron</keyword>
<keyword id="KW-0472">Membrane</keyword>
<keyword id="KW-0479">Metal-binding</keyword>
<keyword id="KW-0496">Mitochondrion</keyword>
<keyword id="KW-0999">Mitochondrion inner membrane</keyword>
<keyword id="KW-0679">Respiratory chain</keyword>
<keyword id="KW-0812">Transmembrane</keyword>
<keyword id="KW-1133">Transmembrane helix</keyword>
<keyword id="KW-0813">Transport</keyword>
<keyword id="KW-0830">Ubiquinone</keyword>
<evidence type="ECO:0000250" key="1"/>
<evidence type="ECO:0000250" key="2">
    <source>
        <dbReference type="UniProtKB" id="P00157"/>
    </source>
</evidence>
<evidence type="ECO:0000255" key="3">
    <source>
        <dbReference type="PROSITE-ProRule" id="PRU00967"/>
    </source>
</evidence>
<evidence type="ECO:0000255" key="4">
    <source>
        <dbReference type="PROSITE-ProRule" id="PRU00968"/>
    </source>
</evidence>
<feature type="chain" id="PRO_0000061055" description="Cytochrome b">
    <location>
        <begin position="1"/>
        <end position="398"/>
    </location>
</feature>
<feature type="transmembrane region" description="Helical" evidence="2">
    <location>
        <begin position="33"/>
        <end position="53"/>
    </location>
</feature>
<feature type="transmembrane region" description="Helical" evidence="2">
    <location>
        <begin position="77"/>
        <end position="98"/>
    </location>
</feature>
<feature type="transmembrane region" description="Helical" evidence="2">
    <location>
        <begin position="113"/>
        <end position="133"/>
    </location>
</feature>
<feature type="transmembrane region" description="Helical" evidence="2">
    <location>
        <begin position="178"/>
        <end position="198"/>
    </location>
</feature>
<feature type="transmembrane region" description="Helical" evidence="2">
    <location>
        <begin position="226"/>
        <end position="246"/>
    </location>
</feature>
<feature type="transmembrane region" description="Helical" evidence="2">
    <location>
        <begin position="288"/>
        <end position="308"/>
    </location>
</feature>
<feature type="transmembrane region" description="Helical" evidence="2">
    <location>
        <begin position="320"/>
        <end position="340"/>
    </location>
</feature>
<feature type="transmembrane region" description="Helical" evidence="2">
    <location>
        <begin position="347"/>
        <end position="367"/>
    </location>
</feature>
<feature type="binding site" description="axial binding residue" evidence="2">
    <location>
        <position position="83"/>
    </location>
    <ligand>
        <name>heme b</name>
        <dbReference type="ChEBI" id="CHEBI:60344"/>
        <label>b562</label>
    </ligand>
    <ligandPart>
        <name>Fe</name>
        <dbReference type="ChEBI" id="CHEBI:18248"/>
    </ligandPart>
</feature>
<feature type="binding site" description="axial binding residue" evidence="2">
    <location>
        <position position="97"/>
    </location>
    <ligand>
        <name>heme b</name>
        <dbReference type="ChEBI" id="CHEBI:60344"/>
        <label>b566</label>
    </ligand>
    <ligandPart>
        <name>Fe</name>
        <dbReference type="ChEBI" id="CHEBI:18248"/>
    </ligandPart>
</feature>
<feature type="binding site" description="axial binding residue" evidence="2">
    <location>
        <position position="182"/>
    </location>
    <ligand>
        <name>heme b</name>
        <dbReference type="ChEBI" id="CHEBI:60344"/>
        <label>b562</label>
    </ligand>
    <ligandPart>
        <name>Fe</name>
        <dbReference type="ChEBI" id="CHEBI:18248"/>
    </ligandPart>
</feature>
<feature type="binding site" description="axial binding residue" evidence="2">
    <location>
        <position position="196"/>
    </location>
    <ligand>
        <name>heme b</name>
        <dbReference type="ChEBI" id="CHEBI:60344"/>
        <label>b566</label>
    </ligand>
    <ligandPart>
        <name>Fe</name>
        <dbReference type="ChEBI" id="CHEBI:18248"/>
    </ligandPart>
</feature>
<feature type="binding site" evidence="2">
    <location>
        <position position="201"/>
    </location>
    <ligand>
        <name>a ubiquinone</name>
        <dbReference type="ChEBI" id="CHEBI:16389"/>
    </ligand>
</feature>
<name>CYB_HYPCM</name>
<dbReference type="EMBL" id="AB021240">
    <property type="protein sequence ID" value="BAB21405.1"/>
    <property type="molecule type" value="Genomic_DNA"/>
</dbReference>
<dbReference type="SMR" id="Q9B9Z1"/>
<dbReference type="GO" id="GO:0005743">
    <property type="term" value="C:mitochondrial inner membrane"/>
    <property type="evidence" value="ECO:0007669"/>
    <property type="project" value="UniProtKB-SubCell"/>
</dbReference>
<dbReference type="GO" id="GO:0045275">
    <property type="term" value="C:respiratory chain complex III"/>
    <property type="evidence" value="ECO:0007669"/>
    <property type="project" value="InterPro"/>
</dbReference>
<dbReference type="GO" id="GO:0046872">
    <property type="term" value="F:metal ion binding"/>
    <property type="evidence" value="ECO:0007669"/>
    <property type="project" value="UniProtKB-KW"/>
</dbReference>
<dbReference type="GO" id="GO:0008121">
    <property type="term" value="F:ubiquinol-cytochrome-c reductase activity"/>
    <property type="evidence" value="ECO:0007669"/>
    <property type="project" value="InterPro"/>
</dbReference>
<dbReference type="GO" id="GO:0006122">
    <property type="term" value="P:mitochondrial electron transport, ubiquinol to cytochrome c"/>
    <property type="evidence" value="ECO:0007669"/>
    <property type="project" value="TreeGrafter"/>
</dbReference>
<dbReference type="CDD" id="cd00290">
    <property type="entry name" value="cytochrome_b_C"/>
    <property type="match status" value="1"/>
</dbReference>
<dbReference type="CDD" id="cd00284">
    <property type="entry name" value="Cytochrome_b_N"/>
    <property type="match status" value="1"/>
</dbReference>
<dbReference type="FunFam" id="1.20.810.10:FF:000002">
    <property type="entry name" value="Cytochrome b"/>
    <property type="match status" value="1"/>
</dbReference>
<dbReference type="Gene3D" id="1.20.810.10">
    <property type="entry name" value="Cytochrome Bc1 Complex, Chain C"/>
    <property type="match status" value="1"/>
</dbReference>
<dbReference type="InterPro" id="IPR005798">
    <property type="entry name" value="Cyt_b/b6_C"/>
</dbReference>
<dbReference type="InterPro" id="IPR036150">
    <property type="entry name" value="Cyt_b/b6_C_sf"/>
</dbReference>
<dbReference type="InterPro" id="IPR005797">
    <property type="entry name" value="Cyt_b/b6_N"/>
</dbReference>
<dbReference type="InterPro" id="IPR027387">
    <property type="entry name" value="Cytb/b6-like_sf"/>
</dbReference>
<dbReference type="InterPro" id="IPR030689">
    <property type="entry name" value="Cytochrome_b"/>
</dbReference>
<dbReference type="InterPro" id="IPR048260">
    <property type="entry name" value="Cytochrome_b_C_euk/bac"/>
</dbReference>
<dbReference type="InterPro" id="IPR048259">
    <property type="entry name" value="Cytochrome_b_N_euk/bac"/>
</dbReference>
<dbReference type="InterPro" id="IPR016174">
    <property type="entry name" value="Di-haem_cyt_TM"/>
</dbReference>
<dbReference type="PANTHER" id="PTHR19271">
    <property type="entry name" value="CYTOCHROME B"/>
    <property type="match status" value="1"/>
</dbReference>
<dbReference type="PANTHER" id="PTHR19271:SF16">
    <property type="entry name" value="CYTOCHROME B"/>
    <property type="match status" value="1"/>
</dbReference>
<dbReference type="Pfam" id="PF00032">
    <property type="entry name" value="Cytochrom_B_C"/>
    <property type="match status" value="1"/>
</dbReference>
<dbReference type="Pfam" id="PF00033">
    <property type="entry name" value="Cytochrome_B"/>
    <property type="match status" value="1"/>
</dbReference>
<dbReference type="PIRSF" id="PIRSF038885">
    <property type="entry name" value="COB"/>
    <property type="match status" value="1"/>
</dbReference>
<dbReference type="PRINTS" id="PR01036">
    <property type="entry name" value="TCRTETB"/>
</dbReference>
<dbReference type="SUPFAM" id="SSF81648">
    <property type="entry name" value="a domain/subunit of cytochrome bc1 complex (Ubiquinol-cytochrome c reductase)"/>
    <property type="match status" value="1"/>
</dbReference>
<dbReference type="SUPFAM" id="SSF81342">
    <property type="entry name" value="Transmembrane di-heme cytochromes"/>
    <property type="match status" value="1"/>
</dbReference>
<dbReference type="PROSITE" id="PS51003">
    <property type="entry name" value="CYTB_CTER"/>
    <property type="match status" value="1"/>
</dbReference>
<dbReference type="PROSITE" id="PS51002">
    <property type="entry name" value="CYTB_NTER"/>
    <property type="match status" value="1"/>
</dbReference>
<accession>Q9B9Z1</accession>
<comment type="function">
    <text evidence="2">Component of the ubiquinol-cytochrome c reductase complex (complex III or cytochrome b-c1 complex) that is part of the mitochondrial respiratory chain. The b-c1 complex mediates electron transfer from ubiquinol to cytochrome c. Contributes to the generation of a proton gradient across the mitochondrial membrane that is then used for ATP synthesis.</text>
</comment>
<comment type="cofactor">
    <cofactor evidence="2">
        <name>heme b</name>
        <dbReference type="ChEBI" id="CHEBI:60344"/>
    </cofactor>
    <text evidence="2">Binds 2 heme b groups non-covalently.</text>
</comment>
<comment type="subunit">
    <text evidence="2">The cytochrome bc1 complex contains 3 respiratory subunits (MT-CYB, CYC1 and UQCRFS1), 2 core proteins (UQCRC1 and UQCRC2) and probably 6 low-molecular weight proteins.</text>
</comment>
<comment type="subcellular location">
    <subcellularLocation>
        <location evidence="2">Mitochondrion inner membrane</location>
        <topology evidence="2">Multi-pass membrane protein</topology>
    </subcellularLocation>
</comment>
<comment type="miscellaneous">
    <text evidence="1">Heme 1 (or BL or b562) is low-potential and absorbs at about 562 nm, and heme 2 (or BH or b566) is high-potential and absorbs at about 566 nm.</text>
</comment>
<comment type="similarity">
    <text evidence="3 4">Belongs to the cytochrome b family.</text>
</comment>
<comment type="caution">
    <text evidence="2">The full-length protein contains only eight transmembrane helices, not nine as predicted by bioinformatics tools.</text>
</comment>
<protein>
    <recommendedName>
        <fullName>Cytochrome b</fullName>
    </recommendedName>
    <alternativeName>
        <fullName>Complex III subunit 3</fullName>
    </alternativeName>
    <alternativeName>
        <fullName>Complex III subunit III</fullName>
    </alternativeName>
    <alternativeName>
        <fullName>Cytochrome b-c1 complex subunit 3</fullName>
    </alternativeName>
    <alternativeName>
        <fullName>Ubiquinol-cytochrome-c reductase complex cytochrome b subunit</fullName>
    </alternativeName>
</protein>
<geneLocation type="mitochondrion"/>